<comment type="function">
    <text evidence="2">In vitro catalyzes the addition of water to fumarate, forming malate. Cannot catalyze the reverse reaction. Cannot use the cis-isomer maleate as substrate.</text>
</comment>
<comment type="catalytic activity">
    <reaction evidence="2">
        <text>(S)-malate = fumarate + H2O</text>
        <dbReference type="Rhea" id="RHEA:12460"/>
        <dbReference type="ChEBI" id="CHEBI:15377"/>
        <dbReference type="ChEBI" id="CHEBI:15589"/>
        <dbReference type="ChEBI" id="CHEBI:29806"/>
        <dbReference type="EC" id="4.2.1.2"/>
    </reaction>
</comment>
<comment type="disruption phenotype">
    <text evidence="1">Cells grow to slightly higher density than wild-type in sublethal levels of streptomycin (PubMed:25316676).</text>
</comment>
<comment type="similarity">
    <text evidence="4">Belongs to the FumD family.</text>
</comment>
<evidence type="ECO:0000269" key="1">
    <source>
    </source>
</evidence>
<evidence type="ECO:0000269" key="2">
    <source>
    </source>
</evidence>
<evidence type="ECO:0000303" key="3">
    <source>
    </source>
</evidence>
<evidence type="ECO:0000305" key="4"/>
<evidence type="ECO:0000312" key="5">
    <source>
        <dbReference type="EMBL" id="AAC74745.1"/>
    </source>
</evidence>
<organism>
    <name type="scientific">Escherichia coli (strain K12)</name>
    <dbReference type="NCBI Taxonomy" id="83333"/>
    <lineage>
        <taxon>Bacteria</taxon>
        <taxon>Pseudomonadati</taxon>
        <taxon>Pseudomonadota</taxon>
        <taxon>Gammaproteobacteria</taxon>
        <taxon>Enterobacterales</taxon>
        <taxon>Enterobacteriaceae</taxon>
        <taxon>Escherichia</taxon>
    </lineage>
</organism>
<gene>
    <name evidence="3" type="primary">fumD</name>
    <name evidence="5" type="synonym">ydhZ</name>
    <name type="ordered locus">b1675</name>
    <name type="ordered locus">JW1665</name>
</gene>
<keyword id="KW-0456">Lyase</keyword>
<keyword id="KW-1185">Reference proteome</keyword>
<accession>P0ACX5</accession>
<accession>P77274</accession>
<accession>Q2MB57</accession>
<sequence>MGNRTKEDELYREMCRVVGKVVLEMRDLGQEPKHIVIAGVLRTALANKRIQRSELEKQAMETVINALVK</sequence>
<protein>
    <recommendedName>
        <fullName evidence="3">Fumarase D</fullName>
        <ecNumber evidence="2">4.2.1.2</ecNumber>
    </recommendedName>
</protein>
<reference key="1">
    <citation type="journal article" date="1997" name="J. Bacteriol.">
        <title>Analysis of the boundaries of Salmonella pathogenicity island 2 and the corresponding chromosomal region of Escherichia coli K-12.</title>
        <authorList>
            <person name="Hensel M."/>
            <person name="Shea J.E."/>
            <person name="Baeumler A.J."/>
            <person name="Gleeson C."/>
            <person name="Blattner F.R."/>
            <person name="Holden D.W."/>
        </authorList>
    </citation>
    <scope>NUCLEOTIDE SEQUENCE [GENOMIC DNA]</scope>
    <source>
        <strain>K12 / MG1655 / ATCC 47076</strain>
    </source>
</reference>
<reference key="2">
    <citation type="journal article" date="1997" name="Science">
        <title>The complete genome sequence of Escherichia coli K-12.</title>
        <authorList>
            <person name="Blattner F.R."/>
            <person name="Plunkett G. III"/>
            <person name="Bloch C.A."/>
            <person name="Perna N.T."/>
            <person name="Burland V."/>
            <person name="Riley M."/>
            <person name="Collado-Vides J."/>
            <person name="Glasner J.D."/>
            <person name="Rode C.K."/>
            <person name="Mayhew G.F."/>
            <person name="Gregor J."/>
            <person name="Davis N.W."/>
            <person name="Kirkpatrick H.A."/>
            <person name="Goeden M.A."/>
            <person name="Rose D.J."/>
            <person name="Mau B."/>
            <person name="Shao Y."/>
        </authorList>
    </citation>
    <scope>NUCLEOTIDE SEQUENCE [LARGE SCALE GENOMIC DNA]</scope>
    <source>
        <strain>K12 / MG1655 / ATCC 47076</strain>
    </source>
</reference>
<reference key="3">
    <citation type="journal article" date="2006" name="Mol. Syst. Biol.">
        <title>Highly accurate genome sequences of Escherichia coli K-12 strains MG1655 and W3110.</title>
        <authorList>
            <person name="Hayashi K."/>
            <person name="Morooka N."/>
            <person name="Yamamoto Y."/>
            <person name="Fujita K."/>
            <person name="Isono K."/>
            <person name="Choi S."/>
            <person name="Ohtsubo E."/>
            <person name="Baba T."/>
            <person name="Wanner B.L."/>
            <person name="Mori H."/>
            <person name="Horiuchi T."/>
        </authorList>
    </citation>
    <scope>NUCLEOTIDE SEQUENCE [LARGE SCALE GENOMIC DNA]</scope>
    <source>
        <strain>K12 / W3110 / ATCC 27325 / DSM 5911</strain>
    </source>
</reference>
<reference key="4">
    <citation type="journal article" date="2015" name="Bioinformatics">
        <title>Novel function discovery with GeneMANIA: a new integrated resource for gene function prediction in Escherichia coli.</title>
        <authorList>
            <person name="Vlasblom J."/>
            <person name="Zuberi K."/>
            <person name="Rodriguez H."/>
            <person name="Arnold R."/>
            <person name="Gagarinova A."/>
            <person name="Deineko V."/>
            <person name="Kumar A."/>
            <person name="Leung E."/>
            <person name="Rizzolo K."/>
            <person name="Samanfar B."/>
            <person name="Chang L."/>
            <person name="Phanse S."/>
            <person name="Golshani A."/>
            <person name="Greenblatt J.F."/>
            <person name="Houry W.A."/>
            <person name="Emili A."/>
            <person name="Morris Q."/>
            <person name="Bader G."/>
            <person name="Babu M."/>
        </authorList>
    </citation>
    <scope>DISRUPTION PHENOTYPE</scope>
    <source>
        <strain>K12 / BW25113</strain>
    </source>
</reference>
<reference key="5">
    <citation type="journal article" date="2017" name="Nat. Methods">
        <title>Nontargeted in vitro metabolomics for high-throughput identification of novel enzymes in Escherichia coli.</title>
        <authorList>
            <person name="Sevin D.C."/>
            <person name="Fuhrer T."/>
            <person name="Zamboni N."/>
            <person name="Sauer U."/>
        </authorList>
    </citation>
    <scope>FUNCTION</scope>
    <scope>CATALYTIC ACTIVITY</scope>
    <source>
        <strain>K12</strain>
    </source>
</reference>
<dbReference type="EC" id="4.2.1.2" evidence="2"/>
<dbReference type="EMBL" id="U68703">
    <property type="protein sequence ID" value="AAB47951.1"/>
    <property type="molecule type" value="Genomic_DNA"/>
</dbReference>
<dbReference type="EMBL" id="U00096">
    <property type="protein sequence ID" value="AAC74745.1"/>
    <property type="molecule type" value="Genomic_DNA"/>
</dbReference>
<dbReference type="EMBL" id="AP009048">
    <property type="protein sequence ID" value="BAE76499.1"/>
    <property type="molecule type" value="Genomic_DNA"/>
</dbReference>
<dbReference type="PIR" id="C64925">
    <property type="entry name" value="C64925"/>
</dbReference>
<dbReference type="RefSeq" id="NP_416190.1">
    <property type="nucleotide sequence ID" value="NC_000913.3"/>
</dbReference>
<dbReference type="RefSeq" id="WP_000528342.1">
    <property type="nucleotide sequence ID" value="NZ_STEB01000003.1"/>
</dbReference>
<dbReference type="SMR" id="P0ACX5"/>
<dbReference type="BioGRID" id="4259670">
    <property type="interactions" value="14"/>
</dbReference>
<dbReference type="FunCoup" id="P0ACX5">
    <property type="interactions" value="121"/>
</dbReference>
<dbReference type="IntAct" id="P0ACX5">
    <property type="interactions" value="10"/>
</dbReference>
<dbReference type="STRING" id="511145.b1675"/>
<dbReference type="jPOST" id="P0ACX5"/>
<dbReference type="PaxDb" id="511145-b1675"/>
<dbReference type="EnsemblBacteria" id="AAC74745">
    <property type="protein sequence ID" value="AAC74745"/>
    <property type="gene ID" value="b1675"/>
</dbReference>
<dbReference type="GeneID" id="93775830"/>
<dbReference type="GeneID" id="946180"/>
<dbReference type="KEGG" id="ecj:JW1665"/>
<dbReference type="KEGG" id="eco:b1675"/>
<dbReference type="KEGG" id="ecoc:C3026_09600"/>
<dbReference type="PATRIC" id="fig|511145.12.peg.1746"/>
<dbReference type="EchoBASE" id="EB3718"/>
<dbReference type="eggNOG" id="ENOG5032THM">
    <property type="taxonomic scope" value="Bacteria"/>
</dbReference>
<dbReference type="HOGENOM" id="CLU_2755438_0_0_6"/>
<dbReference type="InParanoid" id="P0ACX5"/>
<dbReference type="OMA" id="ALYQEMC"/>
<dbReference type="OrthoDB" id="6560929at2"/>
<dbReference type="PhylomeDB" id="P0ACX5"/>
<dbReference type="BioCyc" id="EcoCyc:G6903-MONOMER"/>
<dbReference type="BioCyc" id="MetaCyc:G6903-MONOMER"/>
<dbReference type="PRO" id="PR:P0ACX5"/>
<dbReference type="Proteomes" id="UP000000625">
    <property type="component" value="Chromosome"/>
</dbReference>
<dbReference type="GO" id="GO:0004333">
    <property type="term" value="F:fumarate hydratase activity"/>
    <property type="evidence" value="ECO:0000314"/>
    <property type="project" value="EcoliWiki"/>
</dbReference>
<dbReference type="InterPro" id="IPR024493">
    <property type="entry name" value="FumD"/>
</dbReference>
<dbReference type="NCBIfam" id="NF007630">
    <property type="entry name" value="PRK10292.1"/>
    <property type="match status" value="1"/>
</dbReference>
<dbReference type="Pfam" id="PF10965">
    <property type="entry name" value="DUF2767"/>
    <property type="match status" value="1"/>
</dbReference>
<name>FUMD_ECOLI</name>
<feature type="chain" id="PRO_0000168982" description="Fumarase D">
    <location>
        <begin position="1"/>
        <end position="69"/>
    </location>
</feature>
<proteinExistence type="evidence at protein level"/>